<reference key="1">
    <citation type="journal article" date="2007" name="Genes Dev.">
        <title>New insights into Acinetobacter baumannii pathogenesis revealed by high-density pyrosequencing and transposon mutagenesis.</title>
        <authorList>
            <person name="Smith M.G."/>
            <person name="Gianoulis T.A."/>
            <person name="Pukatzki S."/>
            <person name="Mekalanos J.J."/>
            <person name="Ornston L.N."/>
            <person name="Gerstein M."/>
            <person name="Snyder M."/>
        </authorList>
    </citation>
    <scope>NUCLEOTIDE SEQUENCE [LARGE SCALE GENOMIC DNA]</scope>
    <source>
        <strain>ATCC 17978 / DSM 105126 / CIP 53.77 / LMG 1025 / NCDC KC755 / 5377</strain>
    </source>
</reference>
<sequence>MNNMHSQTTIAAIATPPGRGGVGVIRLSGPKAYDIAQKLTQKNLPEARMAGFRKFYDADGSIMDEGIVLCFPNPHSFTGEDVVELQGHGGPVIQNALLGRLFELGAIAAKAGEFSMRAFENGKMDLVQAEAIADLIDATSQAAARSAVRSLQGAFSTKINTVLEKLIYLRLHVEAAIDFPEEEIDFLADGKILALLEDVQQSVHAVQTSARQGQLLREGLQVVIAGKPNAGKSSLLNALAGVERAIVTDIAGTTRDVLHEKISLNGLPITLTDTAGLRETGDIVEKEGIRRAIKEIEQADLLLLVYDLNQGDDPLKLAQEYFSEHIEPRRLMLIGNKCDLTGQSAEISDYQGFRHITVSAKQEMGVQGLVDAITAHAGFHPEEDTFIARTRHLDAMKRTQLYLAEAREQLVVFNAGELVAESLRLAQNALGEITGDFSADDLLGKIFGSFCIGK</sequence>
<accession>A3M8Y8</accession>
<organism>
    <name type="scientific">Acinetobacter baumannii (strain ATCC 17978 / DSM 105126 / CIP 53.77 / LMG 1025 / NCDC KC755 / 5377)</name>
    <dbReference type="NCBI Taxonomy" id="400667"/>
    <lineage>
        <taxon>Bacteria</taxon>
        <taxon>Pseudomonadati</taxon>
        <taxon>Pseudomonadota</taxon>
        <taxon>Gammaproteobacteria</taxon>
        <taxon>Moraxellales</taxon>
        <taxon>Moraxellaceae</taxon>
        <taxon>Acinetobacter</taxon>
        <taxon>Acinetobacter calcoaceticus/baumannii complex</taxon>
    </lineage>
</organism>
<comment type="function">
    <text evidence="1">Exhibits a very high intrinsic GTPase hydrolysis rate. Involved in the addition of a carboxymethylaminomethyl (cmnm) group at the wobble position (U34) of certain tRNAs, forming tRNA-cmnm(5)s(2)U34.</text>
</comment>
<comment type="cofactor">
    <cofactor evidence="1">
        <name>K(+)</name>
        <dbReference type="ChEBI" id="CHEBI:29103"/>
    </cofactor>
    <text evidence="1">Binds 1 potassium ion per subunit.</text>
</comment>
<comment type="subunit">
    <text evidence="1">Homodimer. Heterotetramer of two MnmE and two MnmG subunits.</text>
</comment>
<comment type="subcellular location">
    <subcellularLocation>
        <location evidence="1">Cytoplasm</location>
    </subcellularLocation>
</comment>
<comment type="similarity">
    <text evidence="1">Belongs to the TRAFAC class TrmE-Era-EngA-EngB-Septin-like GTPase superfamily. TrmE GTPase family.</text>
</comment>
<proteinExistence type="inferred from homology"/>
<gene>
    <name evidence="1" type="primary">mnmE</name>
    <name evidence="1" type="synonym">trmE</name>
    <name type="ordered locus">A1S_2979</name>
</gene>
<dbReference type="EC" id="3.6.-.-" evidence="1"/>
<dbReference type="EMBL" id="CP000521">
    <property type="protein sequence ID" value="ABO13382.2"/>
    <property type="molecule type" value="Genomic_DNA"/>
</dbReference>
<dbReference type="RefSeq" id="WP_000556121.1">
    <property type="nucleotide sequence ID" value="NZ_CP053098.1"/>
</dbReference>
<dbReference type="SMR" id="A3M8Y8"/>
<dbReference type="KEGG" id="acb:A1S_2979"/>
<dbReference type="HOGENOM" id="CLU_019624_4_1_6"/>
<dbReference type="GO" id="GO:0005829">
    <property type="term" value="C:cytosol"/>
    <property type="evidence" value="ECO:0007669"/>
    <property type="project" value="TreeGrafter"/>
</dbReference>
<dbReference type="GO" id="GO:0005525">
    <property type="term" value="F:GTP binding"/>
    <property type="evidence" value="ECO:0007669"/>
    <property type="project" value="UniProtKB-UniRule"/>
</dbReference>
<dbReference type="GO" id="GO:0003924">
    <property type="term" value="F:GTPase activity"/>
    <property type="evidence" value="ECO:0007669"/>
    <property type="project" value="UniProtKB-UniRule"/>
</dbReference>
<dbReference type="GO" id="GO:0046872">
    <property type="term" value="F:metal ion binding"/>
    <property type="evidence" value="ECO:0007669"/>
    <property type="project" value="UniProtKB-KW"/>
</dbReference>
<dbReference type="GO" id="GO:0030488">
    <property type="term" value="P:tRNA methylation"/>
    <property type="evidence" value="ECO:0007669"/>
    <property type="project" value="TreeGrafter"/>
</dbReference>
<dbReference type="GO" id="GO:0002098">
    <property type="term" value="P:tRNA wobble uridine modification"/>
    <property type="evidence" value="ECO:0007669"/>
    <property type="project" value="TreeGrafter"/>
</dbReference>
<dbReference type="CDD" id="cd04164">
    <property type="entry name" value="trmE"/>
    <property type="match status" value="1"/>
</dbReference>
<dbReference type="CDD" id="cd14858">
    <property type="entry name" value="TrmE_N"/>
    <property type="match status" value="1"/>
</dbReference>
<dbReference type="FunFam" id="3.40.50.300:FF:001376">
    <property type="entry name" value="tRNA modification GTPase MnmE"/>
    <property type="match status" value="1"/>
</dbReference>
<dbReference type="Gene3D" id="3.40.50.300">
    <property type="entry name" value="P-loop containing nucleotide triphosphate hydrolases"/>
    <property type="match status" value="1"/>
</dbReference>
<dbReference type="Gene3D" id="3.30.1360.120">
    <property type="entry name" value="Probable tRNA modification gtpase trme, domain 1"/>
    <property type="match status" value="1"/>
</dbReference>
<dbReference type="Gene3D" id="1.20.120.430">
    <property type="entry name" value="tRNA modification GTPase MnmE domain 2"/>
    <property type="match status" value="1"/>
</dbReference>
<dbReference type="HAMAP" id="MF_00379">
    <property type="entry name" value="GTPase_MnmE"/>
    <property type="match status" value="1"/>
</dbReference>
<dbReference type="InterPro" id="IPR031168">
    <property type="entry name" value="G_TrmE"/>
</dbReference>
<dbReference type="InterPro" id="IPR006073">
    <property type="entry name" value="GTP-bd"/>
</dbReference>
<dbReference type="InterPro" id="IPR018948">
    <property type="entry name" value="GTP-bd_TrmE_N"/>
</dbReference>
<dbReference type="InterPro" id="IPR004520">
    <property type="entry name" value="GTPase_MnmE"/>
</dbReference>
<dbReference type="InterPro" id="IPR027368">
    <property type="entry name" value="MnmE_dom2"/>
</dbReference>
<dbReference type="InterPro" id="IPR025867">
    <property type="entry name" value="MnmE_helical"/>
</dbReference>
<dbReference type="InterPro" id="IPR027417">
    <property type="entry name" value="P-loop_NTPase"/>
</dbReference>
<dbReference type="InterPro" id="IPR005225">
    <property type="entry name" value="Small_GTP-bd"/>
</dbReference>
<dbReference type="InterPro" id="IPR027266">
    <property type="entry name" value="TrmE/GcvT_dom1"/>
</dbReference>
<dbReference type="NCBIfam" id="TIGR00450">
    <property type="entry name" value="mnmE_trmE_thdF"/>
    <property type="match status" value="1"/>
</dbReference>
<dbReference type="NCBIfam" id="NF003661">
    <property type="entry name" value="PRK05291.1-3"/>
    <property type="match status" value="1"/>
</dbReference>
<dbReference type="NCBIfam" id="TIGR00231">
    <property type="entry name" value="small_GTP"/>
    <property type="match status" value="1"/>
</dbReference>
<dbReference type="PANTHER" id="PTHR42714">
    <property type="entry name" value="TRNA MODIFICATION GTPASE GTPBP3"/>
    <property type="match status" value="1"/>
</dbReference>
<dbReference type="PANTHER" id="PTHR42714:SF2">
    <property type="entry name" value="TRNA MODIFICATION GTPASE GTPBP3, MITOCHONDRIAL"/>
    <property type="match status" value="1"/>
</dbReference>
<dbReference type="Pfam" id="PF01926">
    <property type="entry name" value="MMR_HSR1"/>
    <property type="match status" value="1"/>
</dbReference>
<dbReference type="Pfam" id="PF12631">
    <property type="entry name" value="MnmE_helical"/>
    <property type="match status" value="1"/>
</dbReference>
<dbReference type="Pfam" id="PF10396">
    <property type="entry name" value="TrmE_N"/>
    <property type="match status" value="1"/>
</dbReference>
<dbReference type="PRINTS" id="PR00326">
    <property type="entry name" value="GTP1OBG"/>
</dbReference>
<dbReference type="SUPFAM" id="SSF52540">
    <property type="entry name" value="P-loop containing nucleoside triphosphate hydrolases"/>
    <property type="match status" value="1"/>
</dbReference>
<dbReference type="SUPFAM" id="SSF116878">
    <property type="entry name" value="TrmE connector domain"/>
    <property type="match status" value="1"/>
</dbReference>
<dbReference type="PROSITE" id="PS51709">
    <property type="entry name" value="G_TRME"/>
    <property type="match status" value="1"/>
</dbReference>
<evidence type="ECO:0000255" key="1">
    <source>
        <dbReference type="HAMAP-Rule" id="MF_00379"/>
    </source>
</evidence>
<protein>
    <recommendedName>
        <fullName evidence="1">tRNA modification GTPase MnmE</fullName>
        <ecNumber evidence="1">3.6.-.-</ecNumber>
    </recommendedName>
</protein>
<name>MNME_ACIBT</name>
<keyword id="KW-0963">Cytoplasm</keyword>
<keyword id="KW-0342">GTP-binding</keyword>
<keyword id="KW-0378">Hydrolase</keyword>
<keyword id="KW-0460">Magnesium</keyword>
<keyword id="KW-0479">Metal-binding</keyword>
<keyword id="KW-0547">Nucleotide-binding</keyword>
<keyword id="KW-0630">Potassium</keyword>
<keyword id="KW-0819">tRNA processing</keyword>
<feature type="chain" id="PRO_0000345697" description="tRNA modification GTPase MnmE">
    <location>
        <begin position="1"/>
        <end position="454"/>
    </location>
</feature>
<feature type="domain" description="TrmE-type G">
    <location>
        <begin position="219"/>
        <end position="378"/>
    </location>
</feature>
<feature type="binding site" evidence="1">
    <location>
        <position position="26"/>
    </location>
    <ligand>
        <name>(6S)-5-formyl-5,6,7,8-tetrahydrofolate</name>
        <dbReference type="ChEBI" id="CHEBI:57457"/>
    </ligand>
</feature>
<feature type="binding site" evidence="1">
    <location>
        <position position="84"/>
    </location>
    <ligand>
        <name>(6S)-5-formyl-5,6,7,8-tetrahydrofolate</name>
        <dbReference type="ChEBI" id="CHEBI:57457"/>
    </ligand>
</feature>
<feature type="binding site" evidence="1">
    <location>
        <position position="123"/>
    </location>
    <ligand>
        <name>(6S)-5-formyl-5,6,7,8-tetrahydrofolate</name>
        <dbReference type="ChEBI" id="CHEBI:57457"/>
    </ligand>
</feature>
<feature type="binding site" evidence="1">
    <location>
        <begin position="229"/>
        <end position="234"/>
    </location>
    <ligand>
        <name>GTP</name>
        <dbReference type="ChEBI" id="CHEBI:37565"/>
    </ligand>
</feature>
<feature type="binding site" evidence="1">
    <location>
        <position position="229"/>
    </location>
    <ligand>
        <name>K(+)</name>
        <dbReference type="ChEBI" id="CHEBI:29103"/>
    </ligand>
</feature>
<feature type="binding site" evidence="1">
    <location>
        <position position="233"/>
    </location>
    <ligand>
        <name>Mg(2+)</name>
        <dbReference type="ChEBI" id="CHEBI:18420"/>
    </ligand>
</feature>
<feature type="binding site" evidence="1">
    <location>
        <begin position="248"/>
        <end position="254"/>
    </location>
    <ligand>
        <name>GTP</name>
        <dbReference type="ChEBI" id="CHEBI:37565"/>
    </ligand>
</feature>
<feature type="binding site" evidence="1">
    <location>
        <position position="248"/>
    </location>
    <ligand>
        <name>K(+)</name>
        <dbReference type="ChEBI" id="CHEBI:29103"/>
    </ligand>
</feature>
<feature type="binding site" evidence="1">
    <location>
        <position position="250"/>
    </location>
    <ligand>
        <name>K(+)</name>
        <dbReference type="ChEBI" id="CHEBI:29103"/>
    </ligand>
</feature>
<feature type="binding site" evidence="1">
    <location>
        <position position="253"/>
    </location>
    <ligand>
        <name>K(+)</name>
        <dbReference type="ChEBI" id="CHEBI:29103"/>
    </ligand>
</feature>
<feature type="binding site" evidence="1">
    <location>
        <position position="254"/>
    </location>
    <ligand>
        <name>Mg(2+)</name>
        <dbReference type="ChEBI" id="CHEBI:18420"/>
    </ligand>
</feature>
<feature type="binding site" evidence="1">
    <location>
        <begin position="273"/>
        <end position="276"/>
    </location>
    <ligand>
        <name>GTP</name>
        <dbReference type="ChEBI" id="CHEBI:37565"/>
    </ligand>
</feature>
<feature type="binding site" evidence="1">
    <location>
        <position position="454"/>
    </location>
    <ligand>
        <name>(6S)-5-formyl-5,6,7,8-tetrahydrofolate</name>
        <dbReference type="ChEBI" id="CHEBI:57457"/>
    </ligand>
</feature>